<organism>
    <name type="scientific">Bacillus velezensis (strain DSM 23117 / BGSC 10A6 / LMG 26770 / FZB42)</name>
    <name type="common">Bacillus amyloliquefaciens subsp. plantarum</name>
    <dbReference type="NCBI Taxonomy" id="326423"/>
    <lineage>
        <taxon>Bacteria</taxon>
        <taxon>Bacillati</taxon>
        <taxon>Bacillota</taxon>
        <taxon>Bacilli</taxon>
        <taxon>Bacillales</taxon>
        <taxon>Bacillaceae</taxon>
        <taxon>Bacillus</taxon>
        <taxon>Bacillus amyloliquefaciens group</taxon>
    </lineage>
</organism>
<proteinExistence type="inferred from homology"/>
<dbReference type="EMBL" id="CP000560">
    <property type="protein sequence ID" value="ABS72588.1"/>
    <property type="molecule type" value="Genomic_DNA"/>
</dbReference>
<dbReference type="RefSeq" id="WP_003156543.1">
    <property type="nucleotide sequence ID" value="NC_009725.2"/>
</dbReference>
<dbReference type="SMR" id="A7Z0R2"/>
<dbReference type="GeneID" id="97412846"/>
<dbReference type="KEGG" id="bay:RBAM_001650"/>
<dbReference type="HOGENOM" id="CLU_135723_6_2_9"/>
<dbReference type="Proteomes" id="UP000001120">
    <property type="component" value="Chromosome"/>
</dbReference>
<dbReference type="GO" id="GO:0005737">
    <property type="term" value="C:cytoplasm"/>
    <property type="evidence" value="ECO:0007669"/>
    <property type="project" value="UniProtKB-ARBA"/>
</dbReference>
<dbReference type="GO" id="GO:1990904">
    <property type="term" value="C:ribonucleoprotein complex"/>
    <property type="evidence" value="ECO:0007669"/>
    <property type="project" value="UniProtKB-KW"/>
</dbReference>
<dbReference type="GO" id="GO:0005840">
    <property type="term" value="C:ribosome"/>
    <property type="evidence" value="ECO:0007669"/>
    <property type="project" value="UniProtKB-KW"/>
</dbReference>
<dbReference type="GO" id="GO:0003735">
    <property type="term" value="F:structural constituent of ribosome"/>
    <property type="evidence" value="ECO:0007669"/>
    <property type="project" value="InterPro"/>
</dbReference>
<dbReference type="GO" id="GO:0006412">
    <property type="term" value="P:translation"/>
    <property type="evidence" value="ECO:0007669"/>
    <property type="project" value="UniProtKB-UniRule"/>
</dbReference>
<dbReference type="HAMAP" id="MF_00251">
    <property type="entry name" value="Ribosomal_bL36"/>
    <property type="match status" value="1"/>
</dbReference>
<dbReference type="InterPro" id="IPR000473">
    <property type="entry name" value="Ribosomal_bL36"/>
</dbReference>
<dbReference type="InterPro" id="IPR035977">
    <property type="entry name" value="Ribosomal_bL36_sp"/>
</dbReference>
<dbReference type="NCBIfam" id="TIGR01022">
    <property type="entry name" value="rpmJ_bact"/>
    <property type="match status" value="1"/>
</dbReference>
<dbReference type="PANTHER" id="PTHR42888">
    <property type="entry name" value="50S RIBOSOMAL PROTEIN L36, CHLOROPLASTIC"/>
    <property type="match status" value="1"/>
</dbReference>
<dbReference type="PANTHER" id="PTHR42888:SF1">
    <property type="entry name" value="LARGE RIBOSOMAL SUBUNIT PROTEIN BL36C"/>
    <property type="match status" value="1"/>
</dbReference>
<dbReference type="Pfam" id="PF00444">
    <property type="entry name" value="Ribosomal_L36"/>
    <property type="match status" value="1"/>
</dbReference>
<dbReference type="SUPFAM" id="SSF57840">
    <property type="entry name" value="Ribosomal protein L36"/>
    <property type="match status" value="1"/>
</dbReference>
<dbReference type="PROSITE" id="PS00828">
    <property type="entry name" value="RIBOSOMAL_L36"/>
    <property type="match status" value="1"/>
</dbReference>
<protein>
    <recommendedName>
        <fullName evidence="1">Large ribosomal subunit protein bL36</fullName>
    </recommendedName>
    <alternativeName>
        <fullName evidence="2">50S ribosomal protein L36</fullName>
    </alternativeName>
</protein>
<gene>
    <name evidence="1" type="primary">rpmJ</name>
    <name type="ordered locus">RBAM_001650</name>
</gene>
<sequence>MKVRPSVKPICEKCKVIRRKGKVMVICENPKHKQKQG</sequence>
<name>RL36_BACVZ</name>
<keyword id="KW-0687">Ribonucleoprotein</keyword>
<keyword id="KW-0689">Ribosomal protein</keyword>
<accession>A7Z0R2</accession>
<comment type="similarity">
    <text evidence="1">Belongs to the bacterial ribosomal protein bL36 family.</text>
</comment>
<evidence type="ECO:0000255" key="1">
    <source>
        <dbReference type="HAMAP-Rule" id="MF_00251"/>
    </source>
</evidence>
<evidence type="ECO:0000305" key="2"/>
<feature type="chain" id="PRO_1000003397" description="Large ribosomal subunit protein bL36">
    <location>
        <begin position="1"/>
        <end position="37"/>
    </location>
</feature>
<reference key="1">
    <citation type="journal article" date="2007" name="Nat. Biotechnol.">
        <title>Comparative analysis of the complete genome sequence of the plant growth-promoting bacterium Bacillus amyloliquefaciens FZB42.</title>
        <authorList>
            <person name="Chen X.H."/>
            <person name="Koumoutsi A."/>
            <person name="Scholz R."/>
            <person name="Eisenreich A."/>
            <person name="Schneider K."/>
            <person name="Heinemeyer I."/>
            <person name="Morgenstern B."/>
            <person name="Voss B."/>
            <person name="Hess W.R."/>
            <person name="Reva O."/>
            <person name="Junge H."/>
            <person name="Voigt B."/>
            <person name="Jungblut P.R."/>
            <person name="Vater J."/>
            <person name="Suessmuth R."/>
            <person name="Liesegang H."/>
            <person name="Strittmatter A."/>
            <person name="Gottschalk G."/>
            <person name="Borriss R."/>
        </authorList>
    </citation>
    <scope>NUCLEOTIDE SEQUENCE [LARGE SCALE GENOMIC DNA]</scope>
    <source>
        <strain>DSM 23117 / BGSC 10A6 / LMG 26770 / FZB42</strain>
    </source>
</reference>